<sequence length="450" mass="50498">MSMEFDAVIIGGGVSGCATFYTLSEYSSLKRVAIVEKCSKLAQISSSAKANSQTIHDGSIETNYTPEKAKKVRLSAYKTRQYALNKGLQNKAIFETQKMAIGVGDEECEFMKKRYESFKEIFVGLEEFDKQTIKELEPNVILGASGIDRHESIIGHGFRKDWSTMNYAKLSENFVEEALKLKPNNQVFLNFKVKKIEKRNDTYALISEDAEEVYAKFVLVNAGSYALPLAQSMGYGLDLGCLPVAGSFYFVPDLLKGKVYTVQNPKLPFAAVHGDPDAIIKGKTRIGPTALAMPKLERNKCWLKGISLELLKMDLNKDVFKIAFDLMSDKEIRNYVLKNMVFELPVIGKREFLKDAQKIIPSLSLEDLEYAHGFGEVRPQVLDKTKRKLELGEKKICTHKGITFNMTPSPGATSCLQNALVDSQEIVAYLGESFELERFYKDLSPEELES</sequence>
<gene>
    <name evidence="1" type="primary">mqo</name>
    <name type="ordered locus">Hac_1519</name>
</gene>
<dbReference type="EC" id="1.1.5.4" evidence="1"/>
<dbReference type="EMBL" id="AM260522">
    <property type="protein sequence ID" value="CAK00239.1"/>
    <property type="molecule type" value="Genomic_DNA"/>
</dbReference>
<dbReference type="RefSeq" id="WP_011578326.1">
    <property type="nucleotide sequence ID" value="NC_008229.1"/>
</dbReference>
<dbReference type="SMR" id="Q17VT7"/>
<dbReference type="STRING" id="382638.Hac_1519"/>
<dbReference type="GeneID" id="31758789"/>
<dbReference type="KEGG" id="hac:Hac_1519"/>
<dbReference type="eggNOG" id="COG0579">
    <property type="taxonomic scope" value="Bacteria"/>
</dbReference>
<dbReference type="HOGENOM" id="CLU_613842_0_0_7"/>
<dbReference type="OrthoDB" id="5337444at2"/>
<dbReference type="BioCyc" id="HACI382638:HAC_RS06440-MONOMER"/>
<dbReference type="UniPathway" id="UPA00223">
    <property type="reaction ID" value="UER01008"/>
</dbReference>
<dbReference type="Proteomes" id="UP000000775">
    <property type="component" value="Chromosome"/>
</dbReference>
<dbReference type="GO" id="GO:0005737">
    <property type="term" value="C:cytoplasm"/>
    <property type="evidence" value="ECO:0007669"/>
    <property type="project" value="TreeGrafter"/>
</dbReference>
<dbReference type="GO" id="GO:0047545">
    <property type="term" value="F:2-hydroxyglutarate dehydrogenase activity"/>
    <property type="evidence" value="ECO:0007669"/>
    <property type="project" value="TreeGrafter"/>
</dbReference>
<dbReference type="GO" id="GO:0008924">
    <property type="term" value="F:L-malate dehydrogenase (quinone) activity"/>
    <property type="evidence" value="ECO:0007669"/>
    <property type="project" value="UniProtKB-UniRule"/>
</dbReference>
<dbReference type="GO" id="GO:0006099">
    <property type="term" value="P:tricarboxylic acid cycle"/>
    <property type="evidence" value="ECO:0007669"/>
    <property type="project" value="UniProtKB-UniRule"/>
</dbReference>
<dbReference type="Gene3D" id="3.30.9.10">
    <property type="entry name" value="D-Amino Acid Oxidase, subunit A, domain 2"/>
    <property type="match status" value="1"/>
</dbReference>
<dbReference type="Gene3D" id="3.50.50.60">
    <property type="entry name" value="FAD/NAD(P)-binding domain"/>
    <property type="match status" value="1"/>
</dbReference>
<dbReference type="HAMAP" id="MF_00212">
    <property type="entry name" value="MQO"/>
    <property type="match status" value="1"/>
</dbReference>
<dbReference type="InterPro" id="IPR036188">
    <property type="entry name" value="FAD/NAD-bd_sf"/>
</dbReference>
<dbReference type="InterPro" id="IPR006231">
    <property type="entry name" value="MQO"/>
</dbReference>
<dbReference type="PANTHER" id="PTHR43104">
    <property type="entry name" value="L-2-HYDROXYGLUTARATE DEHYDROGENASE, MITOCHONDRIAL"/>
    <property type="match status" value="1"/>
</dbReference>
<dbReference type="PANTHER" id="PTHR43104:SF2">
    <property type="entry name" value="L-2-HYDROXYGLUTARATE DEHYDROGENASE, MITOCHONDRIAL"/>
    <property type="match status" value="1"/>
</dbReference>
<dbReference type="Pfam" id="PF06039">
    <property type="entry name" value="Mqo"/>
    <property type="match status" value="1"/>
</dbReference>
<dbReference type="SUPFAM" id="SSF51905">
    <property type="entry name" value="FAD/NAD(P)-binding domain"/>
    <property type="match status" value="1"/>
</dbReference>
<reference key="1">
    <citation type="journal article" date="2006" name="PLoS Genet.">
        <title>Who ate whom? Adaptive Helicobacter genomic changes that accompanied a host jump from early humans to large felines.</title>
        <authorList>
            <person name="Eppinger M."/>
            <person name="Baar C."/>
            <person name="Linz B."/>
            <person name="Raddatz G."/>
            <person name="Lanz C."/>
            <person name="Keller H."/>
            <person name="Morelli G."/>
            <person name="Gressmann H."/>
            <person name="Achtman M."/>
            <person name="Schuster S.C."/>
        </authorList>
    </citation>
    <scope>NUCLEOTIDE SEQUENCE [LARGE SCALE GENOMIC DNA]</scope>
    <source>
        <strain>Sheeba</strain>
    </source>
</reference>
<evidence type="ECO:0000255" key="1">
    <source>
        <dbReference type="HAMAP-Rule" id="MF_00212"/>
    </source>
</evidence>
<protein>
    <recommendedName>
        <fullName evidence="1">Probable malate:quinone oxidoreductase</fullName>
        <ecNumber evidence="1">1.1.5.4</ecNumber>
    </recommendedName>
    <alternativeName>
        <fullName evidence="1">MQO</fullName>
    </alternativeName>
    <alternativeName>
        <fullName evidence="1">Malate dehydrogenase [quinone]</fullName>
    </alternativeName>
</protein>
<accession>Q17VT7</accession>
<proteinExistence type="inferred from homology"/>
<feature type="chain" id="PRO_1000023805" description="Probable malate:quinone oxidoreductase">
    <location>
        <begin position="1"/>
        <end position="450"/>
    </location>
</feature>
<name>MQO_HELAH</name>
<keyword id="KW-0274">FAD</keyword>
<keyword id="KW-0285">Flavoprotein</keyword>
<keyword id="KW-0560">Oxidoreductase</keyword>
<keyword id="KW-0816">Tricarboxylic acid cycle</keyword>
<comment type="catalytic activity">
    <reaction evidence="1">
        <text>(S)-malate + a quinone = a quinol + oxaloacetate</text>
        <dbReference type="Rhea" id="RHEA:46012"/>
        <dbReference type="ChEBI" id="CHEBI:15589"/>
        <dbReference type="ChEBI" id="CHEBI:16452"/>
        <dbReference type="ChEBI" id="CHEBI:24646"/>
        <dbReference type="ChEBI" id="CHEBI:132124"/>
        <dbReference type="EC" id="1.1.5.4"/>
    </reaction>
</comment>
<comment type="cofactor">
    <cofactor evidence="1">
        <name>FAD</name>
        <dbReference type="ChEBI" id="CHEBI:57692"/>
    </cofactor>
</comment>
<comment type="pathway">
    <text evidence="1">Carbohydrate metabolism; tricarboxylic acid cycle; oxaloacetate from (S)-malate (quinone route): step 1/1.</text>
</comment>
<comment type="similarity">
    <text evidence="1">Belongs to the MQO family.</text>
</comment>
<organism>
    <name type="scientific">Helicobacter acinonychis (strain Sheeba)</name>
    <dbReference type="NCBI Taxonomy" id="382638"/>
    <lineage>
        <taxon>Bacteria</taxon>
        <taxon>Pseudomonadati</taxon>
        <taxon>Campylobacterota</taxon>
        <taxon>Epsilonproteobacteria</taxon>
        <taxon>Campylobacterales</taxon>
        <taxon>Helicobacteraceae</taxon>
        <taxon>Helicobacter</taxon>
    </lineage>
</organism>